<proteinExistence type="evidence at transcript level"/>
<feature type="signal peptide" evidence="2">
    <location>
        <begin position="1"/>
        <end position="28"/>
    </location>
</feature>
<feature type="chain" id="PRO_5010396574" description="Serine carboxypeptidase-like 26" evidence="2">
    <location>
        <begin position="29"/>
        <end position="482"/>
    </location>
</feature>
<feature type="active site" evidence="1">
    <location>
        <position position="194"/>
    </location>
</feature>
<feature type="active site" evidence="1">
    <location>
        <position position="403"/>
    </location>
</feature>
<feature type="active site" evidence="1">
    <location>
        <position position="455"/>
    </location>
</feature>
<feature type="glycosylation site" description="N-linked (GlcNAc...) asparagine" evidence="3">
    <location>
        <position position="152"/>
    </location>
</feature>
<feature type="glycosylation site" description="N-linked (GlcNAc...) asparagine" evidence="3">
    <location>
        <position position="269"/>
    </location>
</feature>
<feature type="glycosylation site" description="N-linked (GlcNAc...) asparagine" evidence="3">
    <location>
        <position position="301"/>
    </location>
</feature>
<feature type="glycosylation site" description="N-linked (GlcNAc...) asparagine" evidence="3">
    <location>
        <position position="354"/>
    </location>
</feature>
<feature type="glycosylation site" description="N-linked (GlcNAc...) asparagine" evidence="3">
    <location>
        <position position="375"/>
    </location>
</feature>
<feature type="disulfide bond" evidence="1">
    <location>
        <begin position="101"/>
        <end position="366"/>
    </location>
</feature>
<feature type="disulfide bond" evidence="1">
    <location>
        <begin position="263"/>
        <end position="274"/>
    </location>
</feature>
<feature type="disulfide bond" evidence="1">
    <location>
        <begin position="298"/>
        <end position="333"/>
    </location>
</feature>
<accession>Q5W727</accession>
<sequence length="482" mass="53631">MAVAAAAAARRRDVSCLLLLLCFSSSMAATGGGGGGGEQEADRVARLPGQPASPAVSQFAGYVGVDERHGRALFYWFFEAQASPAPEKKPLLLWLNGGPGCSSIGYGAASELGPLRVARQGAALEFNQYGWNKEANLLFLESPVGVGFSYTNTSSDLSNLNDDFVAEDAYSFLVNWFKRFPQYKDNEFYISGESYAGHYVPQLADLVYERNKDKRASTYINLKGFIVGNPLTDDYYDSKGLAEYAWSHAIVSDQVYERIKKTCNFKNSNWTDDCNAAMNIIFSQYNQIDIYNIYAPKCLLNSTSASSPDRAFFANNQEQFRWRIKMFSGYDPCYSSYAEDYFNKHDVQEAFHANASGLLPGKWQVCSDQILNSYNFSVLSILPIYSKLIKAGLRVWLYSGDADGRVPVISSRYCVEALGLPIKTDWQSWYLDKQVAGRFVEYHGMTMVTVRGAGHLVPLNKPAEGLMLINAFLHGEKLPTSR</sequence>
<reference key="1">
    <citation type="journal article" date="2005" name="Mol. Genet. Genomics">
        <title>A fine physical map of the rice chromosome 5.</title>
        <authorList>
            <person name="Cheng C.-H."/>
            <person name="Chung M.C."/>
            <person name="Liu S.-M."/>
            <person name="Chen S.-K."/>
            <person name="Kao F.Y."/>
            <person name="Lin S.-J."/>
            <person name="Hsiao S.-H."/>
            <person name="Tseng I.C."/>
            <person name="Hsing Y.-I.C."/>
            <person name="Wu H.-P."/>
            <person name="Chen C.-S."/>
            <person name="Shaw J.-F."/>
            <person name="Wu J."/>
            <person name="Matsumoto T."/>
            <person name="Sasaki T."/>
            <person name="Chen H.-C."/>
            <person name="Chow T.-Y."/>
        </authorList>
    </citation>
    <scope>NUCLEOTIDE SEQUENCE [LARGE SCALE GENOMIC DNA]</scope>
    <source>
        <strain>cv. Nipponbare</strain>
    </source>
</reference>
<reference key="2">
    <citation type="journal article" date="2005" name="Nature">
        <title>The map-based sequence of the rice genome.</title>
        <authorList>
            <consortium name="International rice genome sequencing project (IRGSP)"/>
        </authorList>
    </citation>
    <scope>NUCLEOTIDE SEQUENCE [LARGE SCALE GENOMIC DNA]</scope>
    <source>
        <strain>cv. Nipponbare</strain>
    </source>
</reference>
<reference key="3">
    <citation type="journal article" date="2008" name="Nucleic Acids Res.">
        <title>The rice annotation project database (RAP-DB): 2008 update.</title>
        <authorList>
            <consortium name="The rice annotation project (RAP)"/>
        </authorList>
    </citation>
    <scope>GENOME REANNOTATION</scope>
    <source>
        <strain>cv. Nipponbare</strain>
    </source>
</reference>
<reference key="4">
    <citation type="journal article" date="2013" name="Rice">
        <title>Improvement of the Oryza sativa Nipponbare reference genome using next generation sequence and optical map data.</title>
        <authorList>
            <person name="Kawahara Y."/>
            <person name="de la Bastide M."/>
            <person name="Hamilton J.P."/>
            <person name="Kanamori H."/>
            <person name="McCombie W.R."/>
            <person name="Ouyang S."/>
            <person name="Schwartz D.C."/>
            <person name="Tanaka T."/>
            <person name="Wu J."/>
            <person name="Zhou S."/>
            <person name="Childs K.L."/>
            <person name="Davidson R.M."/>
            <person name="Lin H."/>
            <person name="Quesada-Ocampo L."/>
            <person name="Vaillancourt B."/>
            <person name="Sakai H."/>
            <person name="Lee S.S."/>
            <person name="Kim J."/>
            <person name="Numa H."/>
            <person name="Itoh T."/>
            <person name="Buell C.R."/>
            <person name="Matsumoto T."/>
        </authorList>
    </citation>
    <scope>GENOME REANNOTATION</scope>
    <source>
        <strain>cv. Nipponbare</strain>
    </source>
</reference>
<reference key="5">
    <citation type="journal article" date="2003" name="Science">
        <title>Collection, mapping, and annotation of over 28,000 cDNA clones from japonica rice.</title>
        <authorList>
            <consortium name="The rice full-length cDNA consortium"/>
        </authorList>
    </citation>
    <scope>NUCLEOTIDE SEQUENCE [LARGE SCALE MRNA]</scope>
    <source>
        <strain>cv. Nipponbare</strain>
    </source>
</reference>
<reference key="6">
    <citation type="journal article" date="2006" name="BMC Genomics">
        <title>Cross genome comparisons of serine proteases in Arabidopsis and rice.</title>
        <authorList>
            <person name="Tripathi L.P."/>
            <person name="Sowdhamini R."/>
        </authorList>
    </citation>
    <scope>GENE FAMILY</scope>
    <scope>NOMENCLATURE</scope>
</reference>
<reference key="7">
    <citation type="journal article" date="2011" name="Nat. Genet.">
        <title>Natural variation in GS5 plays an important role in regulating grain size and yield in rice.</title>
        <authorList>
            <person name="Li Y."/>
            <person name="Fan C."/>
            <person name="Xing Y."/>
            <person name="Jiang Y."/>
            <person name="Luo L."/>
            <person name="Sun L."/>
            <person name="Shao D."/>
            <person name="Xu C."/>
            <person name="Li X."/>
            <person name="Xiao J."/>
            <person name="He Y."/>
            <person name="Zhang Q."/>
        </authorList>
    </citation>
    <scope>FUNCTION</scope>
</reference>
<reference key="8">
    <citation type="journal article" date="2015" name="J. Exp. Bot.">
        <title>Differential expression of GS5 regulates grain size in rice.</title>
        <authorList>
            <person name="Xu C."/>
            <person name="Liu Y."/>
            <person name="Li Y."/>
            <person name="Xu X."/>
            <person name="Xu C."/>
            <person name="Li X."/>
            <person name="Xiao J."/>
            <person name="Zhang Q."/>
        </authorList>
    </citation>
    <scope>FUNCTION</scope>
    <scope>SUBCELLULAR LOCATION</scope>
    <scope>INDUCTION</scope>
</reference>
<gene>
    <name evidence="6" type="primary">SCP26</name>
    <name evidence="7" type="synonym">GS5</name>
    <name evidence="10" type="ordered locus">Os05g0158500</name>
    <name evidence="8" type="ordered locus">LOC_Os05g06660</name>
    <name evidence="11" type="ORF">OsJ_17198</name>
    <name evidence="9" type="ORF">OSJNBa0017J22.3</name>
</gene>
<evidence type="ECO:0000250" key="1"/>
<evidence type="ECO:0000255" key="2"/>
<evidence type="ECO:0000255" key="3">
    <source>
        <dbReference type="PROSITE-ProRule" id="PRU00498"/>
    </source>
</evidence>
<evidence type="ECO:0000269" key="4">
    <source>
    </source>
</evidence>
<evidence type="ECO:0000269" key="5">
    <source>
    </source>
</evidence>
<evidence type="ECO:0000303" key="6">
    <source>
    </source>
</evidence>
<evidence type="ECO:0000303" key="7">
    <source>
    </source>
</evidence>
<evidence type="ECO:0000305" key="8"/>
<evidence type="ECO:0000312" key="9">
    <source>
        <dbReference type="EMBL" id="AAV43913.1"/>
    </source>
</evidence>
<evidence type="ECO:0000312" key="10">
    <source>
        <dbReference type="EMBL" id="BAF16624.1"/>
    </source>
</evidence>
<evidence type="ECO:0000312" key="11">
    <source>
        <dbReference type="EMBL" id="EEE62407.1"/>
    </source>
</evidence>
<organism>
    <name type="scientific">Oryza sativa subsp. japonica</name>
    <name type="common">Rice</name>
    <dbReference type="NCBI Taxonomy" id="39947"/>
    <lineage>
        <taxon>Eukaryota</taxon>
        <taxon>Viridiplantae</taxon>
        <taxon>Streptophyta</taxon>
        <taxon>Embryophyta</taxon>
        <taxon>Tracheophyta</taxon>
        <taxon>Spermatophyta</taxon>
        <taxon>Magnoliopsida</taxon>
        <taxon>Liliopsida</taxon>
        <taxon>Poales</taxon>
        <taxon>Poaceae</taxon>
        <taxon>BOP clade</taxon>
        <taxon>Oryzoideae</taxon>
        <taxon>Oryzeae</taxon>
        <taxon>Oryzinae</taxon>
        <taxon>Oryza</taxon>
        <taxon>Oryza sativa</taxon>
    </lineage>
</organism>
<keyword id="KW-0121">Carboxypeptidase</keyword>
<keyword id="KW-1015">Disulfide bond</keyword>
<keyword id="KW-0325">Glycoprotein</keyword>
<keyword id="KW-0378">Hydrolase</keyword>
<keyword id="KW-0645">Protease</keyword>
<keyword id="KW-1185">Reference proteome</keyword>
<keyword id="KW-0964">Secreted</keyword>
<keyword id="KW-0732">Signal</keyword>
<protein>
    <recommendedName>
        <fullName evidence="8">Serine carboxypeptidase-like 26</fullName>
        <shortName evidence="6">OsSCP26</shortName>
        <ecNumber evidence="8">3.4.16.-</ecNumber>
    </recommendedName>
    <alternativeName>
        <fullName evidence="7">Protein GRAIN SIZE 5</fullName>
    </alternativeName>
</protein>
<dbReference type="EC" id="3.4.16.-" evidence="8"/>
<dbReference type="EMBL" id="AC119288">
    <property type="protein sequence ID" value="AAV43913.1"/>
    <property type="molecule type" value="Genomic_DNA"/>
</dbReference>
<dbReference type="EMBL" id="AP008211">
    <property type="protein sequence ID" value="BAF16624.1"/>
    <property type="molecule type" value="Genomic_DNA"/>
</dbReference>
<dbReference type="EMBL" id="AP014961">
    <property type="protein sequence ID" value="BAS92383.1"/>
    <property type="molecule type" value="Genomic_DNA"/>
</dbReference>
<dbReference type="EMBL" id="CM000142">
    <property type="protein sequence ID" value="EEE62407.1"/>
    <property type="molecule type" value="Genomic_DNA"/>
</dbReference>
<dbReference type="SMR" id="Q5W727"/>
<dbReference type="FunCoup" id="Q5W727">
    <property type="interactions" value="49"/>
</dbReference>
<dbReference type="STRING" id="39947.Q5W727"/>
<dbReference type="ESTHER" id="orysa-q5w727">
    <property type="family name" value="Carboxypeptidase_S10"/>
</dbReference>
<dbReference type="MEROPS" id="S10.A20"/>
<dbReference type="GlyCosmos" id="Q5W727">
    <property type="glycosylation" value="5 sites, No reported glycans"/>
</dbReference>
<dbReference type="PaxDb" id="39947-Q5W727"/>
<dbReference type="EnsemblPlants" id="Os05t0158500-01">
    <property type="protein sequence ID" value="Os05t0158500-01"/>
    <property type="gene ID" value="Os05g0158500"/>
</dbReference>
<dbReference type="Gramene" id="Os05t0158500-01">
    <property type="protein sequence ID" value="Os05t0158500-01"/>
    <property type="gene ID" value="Os05g0158500"/>
</dbReference>
<dbReference type="KEGG" id="dosa:Os05g0158500"/>
<dbReference type="KEGG" id="osa:4337873"/>
<dbReference type="eggNOG" id="KOG1282">
    <property type="taxonomic scope" value="Eukaryota"/>
</dbReference>
<dbReference type="HOGENOM" id="CLU_008523_13_0_1"/>
<dbReference type="InParanoid" id="Q5W727"/>
<dbReference type="OMA" id="DQVYERI"/>
<dbReference type="OrthoDB" id="443318at2759"/>
<dbReference type="Proteomes" id="UP000000763">
    <property type="component" value="Chromosome 5"/>
</dbReference>
<dbReference type="Proteomes" id="UP000007752">
    <property type="component" value="Chromosome 5"/>
</dbReference>
<dbReference type="Proteomes" id="UP000059680">
    <property type="component" value="Chromosome 5"/>
</dbReference>
<dbReference type="GO" id="GO:0005576">
    <property type="term" value="C:extracellular region"/>
    <property type="evidence" value="ECO:0007669"/>
    <property type="project" value="UniProtKB-SubCell"/>
</dbReference>
<dbReference type="GO" id="GO:0004185">
    <property type="term" value="F:serine-type carboxypeptidase activity"/>
    <property type="evidence" value="ECO:0000318"/>
    <property type="project" value="GO_Central"/>
</dbReference>
<dbReference type="GO" id="GO:0006508">
    <property type="term" value="P:proteolysis"/>
    <property type="evidence" value="ECO:0007669"/>
    <property type="project" value="UniProtKB-KW"/>
</dbReference>
<dbReference type="FunFam" id="3.40.50.11320:FF:000001">
    <property type="entry name" value="Carboxypeptidase"/>
    <property type="match status" value="1"/>
</dbReference>
<dbReference type="FunFam" id="3.40.50.1820:FF:000013">
    <property type="entry name" value="Carboxypeptidase"/>
    <property type="match status" value="1"/>
</dbReference>
<dbReference type="Gene3D" id="3.40.50.11320">
    <property type="match status" value="1"/>
</dbReference>
<dbReference type="Gene3D" id="6.10.250.940">
    <property type="match status" value="1"/>
</dbReference>
<dbReference type="Gene3D" id="3.40.50.1820">
    <property type="entry name" value="alpha/beta hydrolase"/>
    <property type="match status" value="1"/>
</dbReference>
<dbReference type="InterPro" id="IPR029058">
    <property type="entry name" value="AB_hydrolase_fold"/>
</dbReference>
<dbReference type="InterPro" id="IPR001563">
    <property type="entry name" value="Peptidase_S10"/>
</dbReference>
<dbReference type="InterPro" id="IPR018202">
    <property type="entry name" value="Ser_caboxypep_ser_AS"/>
</dbReference>
<dbReference type="PANTHER" id="PTHR11802:SF235">
    <property type="entry name" value="SERINE CARBOXYPEPTIDASE-LIKE 33"/>
    <property type="match status" value="1"/>
</dbReference>
<dbReference type="PANTHER" id="PTHR11802">
    <property type="entry name" value="SERINE PROTEASE FAMILY S10 SERINE CARBOXYPEPTIDASE"/>
    <property type="match status" value="1"/>
</dbReference>
<dbReference type="Pfam" id="PF00450">
    <property type="entry name" value="Peptidase_S10"/>
    <property type="match status" value="1"/>
</dbReference>
<dbReference type="PRINTS" id="PR00724">
    <property type="entry name" value="CRBOXYPTASEC"/>
</dbReference>
<dbReference type="SUPFAM" id="SSF53474">
    <property type="entry name" value="alpha/beta-Hydrolases"/>
    <property type="match status" value="1"/>
</dbReference>
<dbReference type="PROSITE" id="PS00131">
    <property type="entry name" value="CARBOXYPEPT_SER_SER"/>
    <property type="match status" value="1"/>
</dbReference>
<comment type="function">
    <text evidence="4 5">Acts as a positive regulator of grain size by controlling grain width, filling and weight. High expression of GS5 in the grain is correlated with large grain size.</text>
</comment>
<comment type="subcellular location">
    <subcellularLocation>
        <location evidence="4 5">Secreted</location>
    </subcellularLocation>
</comment>
<comment type="induction">
    <text evidence="5">Induced by light. Circadian regulation with a peak of expression at dusk (PubMed:25711711). Down-regulated by abscisic acid (ABA) and brassinosteroid (BR) (PubMed:25711711).</text>
</comment>
<comment type="similarity">
    <text evidence="8">Belongs to the peptidase S10 family.</text>
</comment>
<name>SCP26_ORYSJ</name>